<proteinExistence type="inferred from homology"/>
<protein>
    <recommendedName>
        <fullName evidence="1">Small ribosomal subunit protein uS7</fullName>
    </recommendedName>
    <alternativeName>
        <fullName evidence="2">30S ribosomal protein S7</fullName>
    </alternativeName>
</protein>
<comment type="function">
    <text evidence="1">One of the primary rRNA binding proteins, it binds directly to 16S rRNA where it nucleates assembly of the head domain of the 30S subunit. Is located at the subunit interface close to the decoding center, probably blocks exit of the E-site tRNA.</text>
</comment>
<comment type="subunit">
    <text evidence="1">Part of the 30S ribosomal subunit. Contacts proteins S9 and S11.</text>
</comment>
<comment type="similarity">
    <text evidence="1">Belongs to the universal ribosomal protein uS7 family.</text>
</comment>
<gene>
    <name evidence="1" type="primary">rpsG</name>
    <name type="ordered locus">Sare_4319</name>
</gene>
<organism>
    <name type="scientific">Salinispora arenicola (strain CNS-205)</name>
    <dbReference type="NCBI Taxonomy" id="391037"/>
    <lineage>
        <taxon>Bacteria</taxon>
        <taxon>Bacillati</taxon>
        <taxon>Actinomycetota</taxon>
        <taxon>Actinomycetes</taxon>
        <taxon>Micromonosporales</taxon>
        <taxon>Micromonosporaceae</taxon>
        <taxon>Salinispora</taxon>
    </lineage>
</organism>
<feature type="chain" id="PRO_1000081298" description="Small ribosomal subunit protein uS7">
    <location>
        <begin position="1"/>
        <end position="156"/>
    </location>
</feature>
<accession>A8M533</accession>
<keyword id="KW-0687">Ribonucleoprotein</keyword>
<keyword id="KW-0689">Ribosomal protein</keyword>
<keyword id="KW-0694">RNA-binding</keyword>
<keyword id="KW-0699">rRNA-binding</keyword>
<keyword id="KW-0820">tRNA-binding</keyword>
<dbReference type="EMBL" id="CP000850">
    <property type="protein sequence ID" value="ABW00101.1"/>
    <property type="molecule type" value="Genomic_DNA"/>
</dbReference>
<dbReference type="SMR" id="A8M533"/>
<dbReference type="STRING" id="391037.Sare_4319"/>
<dbReference type="KEGG" id="saq:Sare_4319"/>
<dbReference type="PATRIC" id="fig|391037.6.peg.4360"/>
<dbReference type="eggNOG" id="COG0049">
    <property type="taxonomic scope" value="Bacteria"/>
</dbReference>
<dbReference type="HOGENOM" id="CLU_072226_1_1_11"/>
<dbReference type="OrthoDB" id="9807653at2"/>
<dbReference type="GO" id="GO:0015935">
    <property type="term" value="C:small ribosomal subunit"/>
    <property type="evidence" value="ECO:0007669"/>
    <property type="project" value="InterPro"/>
</dbReference>
<dbReference type="GO" id="GO:0019843">
    <property type="term" value="F:rRNA binding"/>
    <property type="evidence" value="ECO:0007669"/>
    <property type="project" value="UniProtKB-UniRule"/>
</dbReference>
<dbReference type="GO" id="GO:0003735">
    <property type="term" value="F:structural constituent of ribosome"/>
    <property type="evidence" value="ECO:0007669"/>
    <property type="project" value="InterPro"/>
</dbReference>
<dbReference type="GO" id="GO:0000049">
    <property type="term" value="F:tRNA binding"/>
    <property type="evidence" value="ECO:0007669"/>
    <property type="project" value="UniProtKB-UniRule"/>
</dbReference>
<dbReference type="GO" id="GO:0006412">
    <property type="term" value="P:translation"/>
    <property type="evidence" value="ECO:0007669"/>
    <property type="project" value="UniProtKB-UniRule"/>
</dbReference>
<dbReference type="CDD" id="cd14869">
    <property type="entry name" value="uS7_Bacteria"/>
    <property type="match status" value="1"/>
</dbReference>
<dbReference type="FunFam" id="1.10.455.10:FF:000001">
    <property type="entry name" value="30S ribosomal protein S7"/>
    <property type="match status" value="1"/>
</dbReference>
<dbReference type="Gene3D" id="1.10.455.10">
    <property type="entry name" value="Ribosomal protein S7 domain"/>
    <property type="match status" value="1"/>
</dbReference>
<dbReference type="HAMAP" id="MF_00480_B">
    <property type="entry name" value="Ribosomal_uS7_B"/>
    <property type="match status" value="1"/>
</dbReference>
<dbReference type="InterPro" id="IPR000235">
    <property type="entry name" value="Ribosomal_uS7"/>
</dbReference>
<dbReference type="InterPro" id="IPR005717">
    <property type="entry name" value="Ribosomal_uS7_bac/org-type"/>
</dbReference>
<dbReference type="InterPro" id="IPR020606">
    <property type="entry name" value="Ribosomal_uS7_CS"/>
</dbReference>
<dbReference type="InterPro" id="IPR023798">
    <property type="entry name" value="Ribosomal_uS7_dom"/>
</dbReference>
<dbReference type="InterPro" id="IPR036823">
    <property type="entry name" value="Ribosomal_uS7_dom_sf"/>
</dbReference>
<dbReference type="NCBIfam" id="TIGR01029">
    <property type="entry name" value="rpsG_bact"/>
    <property type="match status" value="1"/>
</dbReference>
<dbReference type="PANTHER" id="PTHR11205">
    <property type="entry name" value="RIBOSOMAL PROTEIN S7"/>
    <property type="match status" value="1"/>
</dbReference>
<dbReference type="Pfam" id="PF00177">
    <property type="entry name" value="Ribosomal_S7"/>
    <property type="match status" value="1"/>
</dbReference>
<dbReference type="PIRSF" id="PIRSF002122">
    <property type="entry name" value="RPS7p_RPS7a_RPS5e_RPS7o"/>
    <property type="match status" value="1"/>
</dbReference>
<dbReference type="SUPFAM" id="SSF47973">
    <property type="entry name" value="Ribosomal protein S7"/>
    <property type="match status" value="1"/>
</dbReference>
<dbReference type="PROSITE" id="PS00052">
    <property type="entry name" value="RIBOSOMAL_S7"/>
    <property type="match status" value="1"/>
</dbReference>
<reference key="1">
    <citation type="submission" date="2007-10" db="EMBL/GenBank/DDBJ databases">
        <title>Complete sequence of Salinispora arenicola CNS-205.</title>
        <authorList>
            <consortium name="US DOE Joint Genome Institute"/>
            <person name="Copeland A."/>
            <person name="Lucas S."/>
            <person name="Lapidus A."/>
            <person name="Barry K."/>
            <person name="Glavina del Rio T."/>
            <person name="Dalin E."/>
            <person name="Tice H."/>
            <person name="Pitluck S."/>
            <person name="Foster B."/>
            <person name="Schmutz J."/>
            <person name="Larimer F."/>
            <person name="Land M."/>
            <person name="Hauser L."/>
            <person name="Kyrpides N."/>
            <person name="Ivanova N."/>
            <person name="Jensen P.R."/>
            <person name="Moore B.S."/>
            <person name="Penn K."/>
            <person name="Jenkins C."/>
            <person name="Udwary D."/>
            <person name="Xiang L."/>
            <person name="Gontang E."/>
            <person name="Richardson P."/>
        </authorList>
    </citation>
    <scope>NUCLEOTIDE SEQUENCE [LARGE SCALE GENOMIC DNA]</scope>
    <source>
        <strain>CNS-205</strain>
    </source>
</reference>
<sequence length="156" mass="17650">MPRKGPAPRRPLVADPVYNSPLVTQLVNKILLRGKRQLAETIVYEALEGCREKSGTDPVVTLKRAMDNVKPTLEVRSRRVGGATYQVPVEVRPARATTLGLRWLVTYARARREKTMVERLMNELLDASNGLGAAVKRREDTHKMAESNKAFAHYRW</sequence>
<evidence type="ECO:0000255" key="1">
    <source>
        <dbReference type="HAMAP-Rule" id="MF_00480"/>
    </source>
</evidence>
<evidence type="ECO:0000305" key="2"/>
<name>RS7_SALAI</name>